<evidence type="ECO:0000255" key="1">
    <source>
        <dbReference type="HAMAP-Rule" id="MF_00473"/>
    </source>
</evidence>
<protein>
    <recommendedName>
        <fullName evidence="1">Glucose-6-phosphate isomerase</fullName>
        <shortName evidence="1">GPI</shortName>
        <ecNumber evidence="1">5.3.1.9</ecNumber>
    </recommendedName>
    <alternativeName>
        <fullName evidence="1">Phosphoglucose isomerase</fullName>
        <shortName evidence="1">PGI</shortName>
    </alternativeName>
    <alternativeName>
        <fullName evidence="1">Phosphohexose isomerase</fullName>
        <shortName evidence="1">PHI</shortName>
    </alternativeName>
</protein>
<reference key="1">
    <citation type="submission" date="2007-10" db="EMBL/GenBank/DDBJ databases">
        <title>Complete sequence of Shewanella pealeana ATCC 700345.</title>
        <authorList>
            <consortium name="US DOE Joint Genome Institute"/>
            <person name="Copeland A."/>
            <person name="Lucas S."/>
            <person name="Lapidus A."/>
            <person name="Barry K."/>
            <person name="Glavina del Rio T."/>
            <person name="Dalin E."/>
            <person name="Tice H."/>
            <person name="Pitluck S."/>
            <person name="Chertkov O."/>
            <person name="Brettin T."/>
            <person name="Bruce D."/>
            <person name="Detter J.C."/>
            <person name="Han C."/>
            <person name="Schmutz J."/>
            <person name="Larimer F."/>
            <person name="Land M."/>
            <person name="Hauser L."/>
            <person name="Kyrpides N."/>
            <person name="Kim E."/>
            <person name="Zhao J.-S.Z."/>
            <person name="Manno D."/>
            <person name="Hawari J."/>
            <person name="Richardson P."/>
        </authorList>
    </citation>
    <scope>NUCLEOTIDE SEQUENCE [LARGE SCALE GENOMIC DNA]</scope>
    <source>
        <strain>ATCC 700345 / ANG-SQ1</strain>
    </source>
</reference>
<organism>
    <name type="scientific">Shewanella pealeana (strain ATCC 700345 / ANG-SQ1)</name>
    <dbReference type="NCBI Taxonomy" id="398579"/>
    <lineage>
        <taxon>Bacteria</taxon>
        <taxon>Pseudomonadati</taxon>
        <taxon>Pseudomonadota</taxon>
        <taxon>Gammaproteobacteria</taxon>
        <taxon>Alteromonadales</taxon>
        <taxon>Shewanellaceae</taxon>
        <taxon>Shewanella</taxon>
    </lineage>
</organism>
<name>G6PI_SHEPA</name>
<comment type="function">
    <text evidence="1">Catalyzes the reversible isomerization of glucose-6-phosphate to fructose-6-phosphate.</text>
</comment>
<comment type="catalytic activity">
    <reaction evidence="1">
        <text>alpha-D-glucose 6-phosphate = beta-D-fructose 6-phosphate</text>
        <dbReference type="Rhea" id="RHEA:11816"/>
        <dbReference type="ChEBI" id="CHEBI:57634"/>
        <dbReference type="ChEBI" id="CHEBI:58225"/>
        <dbReference type="EC" id="5.3.1.9"/>
    </reaction>
</comment>
<comment type="pathway">
    <text evidence="1">Carbohydrate biosynthesis; gluconeogenesis.</text>
</comment>
<comment type="pathway">
    <text evidence="1">Carbohydrate degradation; glycolysis; D-glyceraldehyde 3-phosphate and glycerone phosphate from D-glucose: step 2/4.</text>
</comment>
<comment type="subcellular location">
    <subcellularLocation>
        <location evidence="1">Cytoplasm</location>
    </subcellularLocation>
</comment>
<comment type="similarity">
    <text evidence="1">Belongs to the GPI family.</text>
</comment>
<gene>
    <name evidence="1" type="primary">pgi</name>
    <name type="ordered locus">Spea_1073</name>
</gene>
<dbReference type="EC" id="5.3.1.9" evidence="1"/>
<dbReference type="EMBL" id="CP000851">
    <property type="protein sequence ID" value="ABV86400.1"/>
    <property type="molecule type" value="Genomic_DNA"/>
</dbReference>
<dbReference type="RefSeq" id="WP_012154331.1">
    <property type="nucleotide sequence ID" value="NC_009901.1"/>
</dbReference>
<dbReference type="SMR" id="A8H1G3"/>
<dbReference type="STRING" id="398579.Spea_1073"/>
<dbReference type="KEGG" id="spl:Spea_1073"/>
<dbReference type="eggNOG" id="COG0166">
    <property type="taxonomic scope" value="Bacteria"/>
</dbReference>
<dbReference type="HOGENOM" id="CLU_017947_3_1_6"/>
<dbReference type="OrthoDB" id="140919at2"/>
<dbReference type="UniPathway" id="UPA00109">
    <property type="reaction ID" value="UER00181"/>
</dbReference>
<dbReference type="UniPathway" id="UPA00138"/>
<dbReference type="Proteomes" id="UP000002608">
    <property type="component" value="Chromosome"/>
</dbReference>
<dbReference type="GO" id="GO:0005829">
    <property type="term" value="C:cytosol"/>
    <property type="evidence" value="ECO:0007669"/>
    <property type="project" value="TreeGrafter"/>
</dbReference>
<dbReference type="GO" id="GO:0097367">
    <property type="term" value="F:carbohydrate derivative binding"/>
    <property type="evidence" value="ECO:0007669"/>
    <property type="project" value="InterPro"/>
</dbReference>
<dbReference type="GO" id="GO:0004347">
    <property type="term" value="F:glucose-6-phosphate isomerase activity"/>
    <property type="evidence" value="ECO:0007669"/>
    <property type="project" value="UniProtKB-UniRule"/>
</dbReference>
<dbReference type="GO" id="GO:0048029">
    <property type="term" value="F:monosaccharide binding"/>
    <property type="evidence" value="ECO:0007669"/>
    <property type="project" value="TreeGrafter"/>
</dbReference>
<dbReference type="GO" id="GO:0006094">
    <property type="term" value="P:gluconeogenesis"/>
    <property type="evidence" value="ECO:0007669"/>
    <property type="project" value="UniProtKB-UniRule"/>
</dbReference>
<dbReference type="GO" id="GO:0051156">
    <property type="term" value="P:glucose 6-phosphate metabolic process"/>
    <property type="evidence" value="ECO:0007669"/>
    <property type="project" value="TreeGrafter"/>
</dbReference>
<dbReference type="GO" id="GO:0006096">
    <property type="term" value="P:glycolytic process"/>
    <property type="evidence" value="ECO:0007669"/>
    <property type="project" value="UniProtKB-UniRule"/>
</dbReference>
<dbReference type="CDD" id="cd05015">
    <property type="entry name" value="SIS_PGI_1"/>
    <property type="match status" value="1"/>
</dbReference>
<dbReference type="CDD" id="cd05016">
    <property type="entry name" value="SIS_PGI_2"/>
    <property type="match status" value="1"/>
</dbReference>
<dbReference type="FunFam" id="3.40.50.10490:FF:000018">
    <property type="entry name" value="Glucose-6-phosphate isomerase"/>
    <property type="match status" value="1"/>
</dbReference>
<dbReference type="Gene3D" id="1.10.1390.10">
    <property type="match status" value="1"/>
</dbReference>
<dbReference type="Gene3D" id="3.40.50.10490">
    <property type="entry name" value="Glucose-6-phosphate isomerase like protein, domain 1"/>
    <property type="match status" value="2"/>
</dbReference>
<dbReference type="HAMAP" id="MF_00473">
    <property type="entry name" value="G6P_isomerase"/>
    <property type="match status" value="1"/>
</dbReference>
<dbReference type="InterPro" id="IPR001672">
    <property type="entry name" value="G6P_Isomerase"/>
</dbReference>
<dbReference type="InterPro" id="IPR023096">
    <property type="entry name" value="G6P_Isomerase_C"/>
</dbReference>
<dbReference type="InterPro" id="IPR018189">
    <property type="entry name" value="Phosphoglucose_isomerase_CS"/>
</dbReference>
<dbReference type="InterPro" id="IPR046348">
    <property type="entry name" value="SIS_dom_sf"/>
</dbReference>
<dbReference type="InterPro" id="IPR035476">
    <property type="entry name" value="SIS_PGI_1"/>
</dbReference>
<dbReference type="InterPro" id="IPR035482">
    <property type="entry name" value="SIS_PGI_2"/>
</dbReference>
<dbReference type="NCBIfam" id="NF001211">
    <property type="entry name" value="PRK00179.1"/>
    <property type="match status" value="1"/>
</dbReference>
<dbReference type="PANTHER" id="PTHR11469">
    <property type="entry name" value="GLUCOSE-6-PHOSPHATE ISOMERASE"/>
    <property type="match status" value="1"/>
</dbReference>
<dbReference type="PANTHER" id="PTHR11469:SF1">
    <property type="entry name" value="GLUCOSE-6-PHOSPHATE ISOMERASE"/>
    <property type="match status" value="1"/>
</dbReference>
<dbReference type="Pfam" id="PF00342">
    <property type="entry name" value="PGI"/>
    <property type="match status" value="1"/>
</dbReference>
<dbReference type="PRINTS" id="PR00662">
    <property type="entry name" value="G6PISOMERASE"/>
</dbReference>
<dbReference type="SUPFAM" id="SSF53697">
    <property type="entry name" value="SIS domain"/>
    <property type="match status" value="1"/>
</dbReference>
<dbReference type="PROSITE" id="PS00765">
    <property type="entry name" value="P_GLUCOSE_ISOMERASE_1"/>
    <property type="match status" value="1"/>
</dbReference>
<dbReference type="PROSITE" id="PS00174">
    <property type="entry name" value="P_GLUCOSE_ISOMERASE_2"/>
    <property type="match status" value="1"/>
</dbReference>
<dbReference type="PROSITE" id="PS51463">
    <property type="entry name" value="P_GLUCOSE_ISOMERASE_3"/>
    <property type="match status" value="1"/>
</dbReference>
<accession>A8H1G3</accession>
<keyword id="KW-0963">Cytoplasm</keyword>
<keyword id="KW-0312">Gluconeogenesis</keyword>
<keyword id="KW-0324">Glycolysis</keyword>
<keyword id="KW-0413">Isomerase</keyword>
<keyword id="KW-1185">Reference proteome</keyword>
<sequence>MTELTQQASWQALEKHSKSLPHMRELFSTEPERFGNMSTQACGLFLDYSKNRASQETMSLLFNLAKDSQLESKIKAMFAGHVINNTEQRAVLHTALRAPADKVINVDGNNIVAEVQQTLAKMGEFVESLTSGQWKGYTGKTITDVVSIGIGGSFLGPKIVSQALRPYWTGELNCHFVANVDGTSITEKLKGLDPQTTLFVMSSKSFGTQETLTNTLTAKEWFLSQGASQSDVAKHFVAVSSNVSKATEFGIDANNIFPMWDWVGGRYSLWSAIGLPIALLIGMDNFRQLLAGAHEMDEHFANTPLESNMPVIMGMFSLWYGNFFNAQSHVVLTYDHYLRGLPAYFQQLDMESNGKSVTLNGTDVDYSTGPIIWGGEGTNGQHAYHQLLHQGTALIPADFIMPLNSHNPVGEHHVQLASNCFGQTQALMQGRTFDEALAELNQSGLAEEQKLLIAKHKVMPGNKPSNTILMDKLTPSTLGSLIALYEHRTFVQGAIWQINSFDQWGVELGKQLGNDVLERLVADTEAKELDSSSNGLINLFKQGKI</sequence>
<feature type="chain" id="PRO_1000081250" description="Glucose-6-phosphate isomerase">
    <location>
        <begin position="1"/>
        <end position="545"/>
    </location>
</feature>
<feature type="active site" description="Proton donor" evidence="1">
    <location>
        <position position="351"/>
    </location>
</feature>
<feature type="active site" evidence="1">
    <location>
        <position position="382"/>
    </location>
</feature>
<feature type="active site" evidence="1">
    <location>
        <position position="510"/>
    </location>
</feature>
<proteinExistence type="inferred from homology"/>